<name>VNPD_PSEAU</name>
<keyword id="KW-1015">Disulfide bond</keyword>
<keyword id="KW-0382">Hypotensive agent</keyword>
<keyword id="KW-0964">Secreted</keyword>
<keyword id="KW-0800">Toxin</keyword>
<keyword id="KW-0838">Vasoactive</keyword>
<keyword id="KW-0840">Vasodilator</keyword>
<evidence type="ECO:0000250" key="1">
    <source>
        <dbReference type="UniProtKB" id="C6EVG7"/>
    </source>
</evidence>
<evidence type="ECO:0000250" key="2">
    <source>
        <dbReference type="UniProtKB" id="Q3SAE9"/>
    </source>
</evidence>
<evidence type="ECO:0000256" key="3">
    <source>
        <dbReference type="SAM" id="MobiDB-lite"/>
    </source>
</evidence>
<evidence type="ECO:0000303" key="4">
    <source>
    </source>
</evidence>
<evidence type="ECO:0000305" key="5"/>
<evidence type="ECO:0000305" key="6">
    <source>
    </source>
</evidence>
<protein>
    <recommendedName>
        <fullName evidence="4">Natriuretic peptide PaNP-d</fullName>
    </recommendedName>
</protein>
<proteinExistence type="evidence at transcript level"/>
<accession>Q3SAF2</accession>
<sequence>SGSKTAEIDDGCFGLPLDPIGSTSGMGCRSVPKPIPGGS</sequence>
<dbReference type="EMBL" id="DQ116728">
    <property type="protein sequence ID" value="AAZ82823.1"/>
    <property type="molecule type" value="mRNA"/>
</dbReference>
<dbReference type="GO" id="GO:0005576">
    <property type="term" value="C:extracellular region"/>
    <property type="evidence" value="ECO:0007669"/>
    <property type="project" value="UniProtKB-SubCell"/>
</dbReference>
<dbReference type="GO" id="GO:0005179">
    <property type="term" value="F:hormone activity"/>
    <property type="evidence" value="ECO:0007669"/>
    <property type="project" value="InterPro"/>
</dbReference>
<dbReference type="GO" id="GO:0090729">
    <property type="term" value="F:toxin activity"/>
    <property type="evidence" value="ECO:0007669"/>
    <property type="project" value="UniProtKB-KW"/>
</dbReference>
<dbReference type="GO" id="GO:0008217">
    <property type="term" value="P:regulation of blood pressure"/>
    <property type="evidence" value="ECO:0007669"/>
    <property type="project" value="UniProtKB-KW"/>
</dbReference>
<dbReference type="GO" id="GO:0042311">
    <property type="term" value="P:vasodilation"/>
    <property type="evidence" value="ECO:0007669"/>
    <property type="project" value="UniProtKB-KW"/>
</dbReference>
<dbReference type="InterPro" id="IPR000663">
    <property type="entry name" value="Natr_peptide"/>
</dbReference>
<dbReference type="Pfam" id="PF00212">
    <property type="entry name" value="ANP"/>
    <property type="match status" value="1"/>
</dbReference>
<dbReference type="SMART" id="SM00183">
    <property type="entry name" value="NAT_PEP"/>
    <property type="match status" value="1"/>
</dbReference>
<feature type="propeptide" id="PRO_0000459638" evidence="5">
    <location>
        <begin position="1" status="less than"/>
        <end position="8"/>
    </location>
</feature>
<feature type="peptide" id="PRO_5000140406" description="Natriuretic peptide PaNP-d" evidence="2">
    <location>
        <begin position="9"/>
        <end position="39"/>
    </location>
</feature>
<feature type="region of interest" description="Disordered" evidence="3">
    <location>
        <begin position="1"/>
        <end position="39"/>
    </location>
</feature>
<feature type="disulfide bond" evidence="2">
    <location>
        <begin position="12"/>
        <end position="28"/>
    </location>
</feature>
<feature type="non-terminal residue">
    <location>
        <position position="1"/>
    </location>
</feature>
<comment type="function">
    <text evidence="1 2">Snake venom natriuretic peptide that targets both NPR1 and NPR2 (By similarity). Exhibits hypotensive and vasodepressor activities (By similarity).</text>
</comment>
<comment type="subcellular location">
    <subcellularLocation>
        <location evidence="6">Secreted</location>
    </subcellularLocation>
</comment>
<comment type="tissue specificity">
    <text evidence="6">Expressed by the venom gland.</text>
</comment>
<comment type="similarity">
    <text evidence="5">Belongs to the natriuretic peptide family.</text>
</comment>
<reference key="1">
    <citation type="journal article" date="2006" name="Biochimie">
        <title>Cloning and characterisation of natriuretic peptides from the venom glands of Australian elapids.</title>
        <authorList>
            <person name="St Pierre L."/>
            <person name="Flight S."/>
            <person name="Masci P.P."/>
            <person name="Hanchard K.J."/>
            <person name="Lewis R.J."/>
            <person name="Alewood P.F."/>
            <person name="de Jersey J."/>
            <person name="Lavin M.F."/>
        </authorList>
    </citation>
    <scope>NUCLEOTIDE SEQUENCE [MRNA]</scope>
    <source>
        <tissue>Venom gland</tissue>
    </source>
</reference>
<organism>
    <name type="scientific">Pseudechis australis</name>
    <name type="common">Mulga snake</name>
    <name type="synonym">King brown snake</name>
    <dbReference type="NCBI Taxonomy" id="8670"/>
    <lineage>
        <taxon>Eukaryota</taxon>
        <taxon>Metazoa</taxon>
        <taxon>Chordata</taxon>
        <taxon>Craniata</taxon>
        <taxon>Vertebrata</taxon>
        <taxon>Euteleostomi</taxon>
        <taxon>Lepidosauria</taxon>
        <taxon>Squamata</taxon>
        <taxon>Bifurcata</taxon>
        <taxon>Unidentata</taxon>
        <taxon>Episquamata</taxon>
        <taxon>Toxicofera</taxon>
        <taxon>Serpentes</taxon>
        <taxon>Colubroidea</taxon>
        <taxon>Elapidae</taxon>
        <taxon>Hydrophiinae</taxon>
        <taxon>Pseudechis</taxon>
    </lineage>
</organism>